<evidence type="ECO:0000255" key="1">
    <source>
        <dbReference type="HAMAP-Rule" id="MF_00073"/>
    </source>
</evidence>
<feature type="chain" id="PRO_1000075182" description="Transcription antitermination protein NusB">
    <location>
        <begin position="1"/>
        <end position="156"/>
    </location>
</feature>
<sequence length="156" mass="18145">MNRKKTRELTMKLLFQMAINKEKADVIISNLKENIEMEQGSQKNSISQIYGENMGDLKNIDIDYVVRVLRGIEKNEDMLNIEIEKYLRNWKLNRLSKVDSAILKICTYEFLHEDDIPEKVSINEAIELAKKYSSEKSASFINGVLGNMIKDEKIKK</sequence>
<keyword id="KW-1185">Reference proteome</keyword>
<keyword id="KW-0694">RNA-binding</keyword>
<keyword id="KW-0804">Transcription</keyword>
<keyword id="KW-0889">Transcription antitermination</keyword>
<keyword id="KW-0805">Transcription regulation</keyword>
<gene>
    <name evidence="1" type="primary">nusB</name>
    <name type="ordered locus">CKL_1227</name>
</gene>
<comment type="function">
    <text evidence="1">Involved in transcription antitermination. Required for transcription of ribosomal RNA (rRNA) genes. Binds specifically to the boxA antiterminator sequence of the ribosomal RNA (rrn) operons.</text>
</comment>
<comment type="similarity">
    <text evidence="1">Belongs to the NusB family.</text>
</comment>
<name>NUSB_CLOK5</name>
<proteinExistence type="inferred from homology"/>
<organism>
    <name type="scientific">Clostridium kluyveri (strain ATCC 8527 / DSM 555 / NBRC 12016 / NCIMB 10680 / K1)</name>
    <dbReference type="NCBI Taxonomy" id="431943"/>
    <lineage>
        <taxon>Bacteria</taxon>
        <taxon>Bacillati</taxon>
        <taxon>Bacillota</taxon>
        <taxon>Clostridia</taxon>
        <taxon>Eubacteriales</taxon>
        <taxon>Clostridiaceae</taxon>
        <taxon>Clostridium</taxon>
    </lineage>
</organism>
<dbReference type="EMBL" id="CP000673">
    <property type="protein sequence ID" value="EDK33269.1"/>
    <property type="molecule type" value="Genomic_DNA"/>
</dbReference>
<dbReference type="RefSeq" id="WP_012101609.1">
    <property type="nucleotide sequence ID" value="NC_009706.1"/>
</dbReference>
<dbReference type="SMR" id="A5N7I8"/>
<dbReference type="STRING" id="431943.CKL_1227"/>
<dbReference type="KEGG" id="ckl:CKL_1227"/>
<dbReference type="eggNOG" id="COG0781">
    <property type="taxonomic scope" value="Bacteria"/>
</dbReference>
<dbReference type="HOGENOM" id="CLU_087843_3_1_9"/>
<dbReference type="Proteomes" id="UP000002411">
    <property type="component" value="Chromosome"/>
</dbReference>
<dbReference type="GO" id="GO:0005829">
    <property type="term" value="C:cytosol"/>
    <property type="evidence" value="ECO:0007669"/>
    <property type="project" value="TreeGrafter"/>
</dbReference>
<dbReference type="GO" id="GO:0003723">
    <property type="term" value="F:RNA binding"/>
    <property type="evidence" value="ECO:0007669"/>
    <property type="project" value="UniProtKB-UniRule"/>
</dbReference>
<dbReference type="GO" id="GO:0006353">
    <property type="term" value="P:DNA-templated transcription termination"/>
    <property type="evidence" value="ECO:0007669"/>
    <property type="project" value="UniProtKB-UniRule"/>
</dbReference>
<dbReference type="GO" id="GO:0031564">
    <property type="term" value="P:transcription antitermination"/>
    <property type="evidence" value="ECO:0007669"/>
    <property type="project" value="UniProtKB-KW"/>
</dbReference>
<dbReference type="Gene3D" id="1.10.940.10">
    <property type="entry name" value="NusB-like"/>
    <property type="match status" value="1"/>
</dbReference>
<dbReference type="HAMAP" id="MF_00073">
    <property type="entry name" value="NusB"/>
    <property type="match status" value="1"/>
</dbReference>
<dbReference type="InterPro" id="IPR035926">
    <property type="entry name" value="NusB-like_sf"/>
</dbReference>
<dbReference type="InterPro" id="IPR011605">
    <property type="entry name" value="NusB_fam"/>
</dbReference>
<dbReference type="InterPro" id="IPR006027">
    <property type="entry name" value="NusB_RsmB_TIM44"/>
</dbReference>
<dbReference type="NCBIfam" id="TIGR01951">
    <property type="entry name" value="nusB"/>
    <property type="match status" value="1"/>
</dbReference>
<dbReference type="PANTHER" id="PTHR11078:SF3">
    <property type="entry name" value="ANTITERMINATION NUSB DOMAIN-CONTAINING PROTEIN"/>
    <property type="match status" value="1"/>
</dbReference>
<dbReference type="PANTHER" id="PTHR11078">
    <property type="entry name" value="N UTILIZATION SUBSTANCE PROTEIN B-RELATED"/>
    <property type="match status" value="1"/>
</dbReference>
<dbReference type="Pfam" id="PF01029">
    <property type="entry name" value="NusB"/>
    <property type="match status" value="1"/>
</dbReference>
<dbReference type="SUPFAM" id="SSF48013">
    <property type="entry name" value="NusB-like"/>
    <property type="match status" value="1"/>
</dbReference>
<reference key="1">
    <citation type="journal article" date="2008" name="Proc. Natl. Acad. Sci. U.S.A.">
        <title>The genome of Clostridium kluyveri, a strict anaerobe with unique metabolic features.</title>
        <authorList>
            <person name="Seedorf H."/>
            <person name="Fricke W.F."/>
            <person name="Veith B."/>
            <person name="Brueggemann H."/>
            <person name="Liesegang H."/>
            <person name="Strittmatter A."/>
            <person name="Miethke M."/>
            <person name="Buckel W."/>
            <person name="Hinderberger J."/>
            <person name="Li F."/>
            <person name="Hagemeier C."/>
            <person name="Thauer R.K."/>
            <person name="Gottschalk G."/>
        </authorList>
    </citation>
    <scope>NUCLEOTIDE SEQUENCE [LARGE SCALE GENOMIC DNA]</scope>
    <source>
        <strain>ATCC 8527 / DSM 555 / NBRC 12016 / NCIMB 10680 / K1</strain>
    </source>
</reference>
<protein>
    <recommendedName>
        <fullName evidence="1">Transcription antitermination protein NusB</fullName>
    </recommendedName>
    <alternativeName>
        <fullName evidence="1">Antitermination factor NusB</fullName>
    </alternativeName>
</protein>
<accession>A5N7I8</accession>